<reference key="1">
    <citation type="journal article" date="2002" name="J. Bacteriol.">
        <title>Genome sequence and analysis of the oral bacterium Fusobacterium nucleatum strain ATCC 25586.</title>
        <authorList>
            <person name="Kapatral V."/>
            <person name="Anderson I."/>
            <person name="Ivanova N."/>
            <person name="Reznik G."/>
            <person name="Los T."/>
            <person name="Lykidis A."/>
            <person name="Bhattacharyya A."/>
            <person name="Bartman A."/>
            <person name="Gardner W."/>
            <person name="Grechkin G."/>
            <person name="Zhu L."/>
            <person name="Vasieva O."/>
            <person name="Chu L."/>
            <person name="Kogan Y."/>
            <person name="Chaga O."/>
            <person name="Goltsman E."/>
            <person name="Bernal A."/>
            <person name="Larsen N."/>
            <person name="D'Souza M."/>
            <person name="Walunas T."/>
            <person name="Pusch G."/>
            <person name="Haselkorn R."/>
            <person name="Fonstein M."/>
            <person name="Kyrpides N.C."/>
            <person name="Overbeek R."/>
        </authorList>
    </citation>
    <scope>NUCLEOTIDE SEQUENCE [LARGE SCALE GENOMIC DNA]</scope>
    <source>
        <strain>ATCC 25586 / DSM 15643 / BCRC 10681 / CIP 101130 / JCM 8532 / KCTC 2640 / LMG 13131 / VPI 4355</strain>
    </source>
</reference>
<comment type="function">
    <text evidence="1">Catalyzes the conversion of N-formimidoyl-L-glutamate to L-glutamate and formamide.</text>
</comment>
<comment type="catalytic activity">
    <reaction evidence="1">
        <text>N-formimidoyl-L-glutamate + H2O = formamide + L-glutamate</text>
        <dbReference type="Rhea" id="RHEA:22492"/>
        <dbReference type="ChEBI" id="CHEBI:15377"/>
        <dbReference type="ChEBI" id="CHEBI:16397"/>
        <dbReference type="ChEBI" id="CHEBI:29985"/>
        <dbReference type="ChEBI" id="CHEBI:58928"/>
        <dbReference type="EC" id="3.5.3.8"/>
    </reaction>
</comment>
<comment type="cofactor">
    <cofactor evidence="1">
        <name>Mn(2+)</name>
        <dbReference type="ChEBI" id="CHEBI:29035"/>
    </cofactor>
    <text evidence="1">Binds 2 manganese ions per subunit.</text>
</comment>
<comment type="pathway">
    <text evidence="1">Amino-acid degradation; L-histidine degradation into L-glutamate; L-glutamate from N-formimidoyl-L-glutamate (hydrolase route): step 1/1.</text>
</comment>
<comment type="similarity">
    <text evidence="1">Belongs to the arginase family.</text>
</comment>
<organism>
    <name type="scientific">Fusobacterium nucleatum subsp. nucleatum (strain ATCC 25586 / DSM 15643 / BCRC 10681 / CIP 101130 / JCM 8532 / KCTC 2640 / LMG 13131 / VPI 4355)</name>
    <dbReference type="NCBI Taxonomy" id="190304"/>
    <lineage>
        <taxon>Bacteria</taxon>
        <taxon>Fusobacteriati</taxon>
        <taxon>Fusobacteriota</taxon>
        <taxon>Fusobacteriia</taxon>
        <taxon>Fusobacteriales</taxon>
        <taxon>Fusobacteriaceae</taxon>
        <taxon>Fusobacterium</taxon>
    </lineage>
</organism>
<dbReference type="EC" id="3.5.3.8" evidence="1"/>
<dbReference type="EMBL" id="AE009951">
    <property type="protein sequence ID" value="AAL94858.1"/>
    <property type="molecule type" value="Genomic_DNA"/>
</dbReference>
<dbReference type="RefSeq" id="NP_603559.1">
    <property type="nucleotide sequence ID" value="NC_003454.1"/>
</dbReference>
<dbReference type="RefSeq" id="WP_005902051.1">
    <property type="nucleotide sequence ID" value="NZ_OZ209243.1"/>
</dbReference>
<dbReference type="SMR" id="Q8RFN0"/>
<dbReference type="FunCoup" id="Q8RFN0">
    <property type="interactions" value="226"/>
</dbReference>
<dbReference type="STRING" id="190304.FN0662"/>
<dbReference type="PaxDb" id="190304-FN0662"/>
<dbReference type="EnsemblBacteria" id="AAL94858">
    <property type="protein sequence ID" value="AAL94858"/>
    <property type="gene ID" value="FN0662"/>
</dbReference>
<dbReference type="GeneID" id="79783659"/>
<dbReference type="KEGG" id="fnu:FN0662"/>
<dbReference type="PATRIC" id="fig|190304.8.peg.1227"/>
<dbReference type="eggNOG" id="COG0010">
    <property type="taxonomic scope" value="Bacteria"/>
</dbReference>
<dbReference type="HOGENOM" id="CLU_039478_2_0_0"/>
<dbReference type="InParanoid" id="Q8RFN0"/>
<dbReference type="BioCyc" id="FNUC190304:G1FZS-1248-MONOMER"/>
<dbReference type="UniPathway" id="UPA00379">
    <property type="reaction ID" value="UER00552"/>
</dbReference>
<dbReference type="Proteomes" id="UP000002521">
    <property type="component" value="Chromosome"/>
</dbReference>
<dbReference type="GO" id="GO:0008783">
    <property type="term" value="F:agmatinase activity"/>
    <property type="evidence" value="ECO:0000318"/>
    <property type="project" value="GO_Central"/>
</dbReference>
<dbReference type="GO" id="GO:0050415">
    <property type="term" value="F:formimidoylglutamase activity"/>
    <property type="evidence" value="ECO:0007669"/>
    <property type="project" value="UniProtKB-UniRule"/>
</dbReference>
<dbReference type="GO" id="GO:0030145">
    <property type="term" value="F:manganese ion binding"/>
    <property type="evidence" value="ECO:0007669"/>
    <property type="project" value="UniProtKB-UniRule"/>
</dbReference>
<dbReference type="GO" id="GO:0019556">
    <property type="term" value="P:L-histidine catabolic process to glutamate and formamide"/>
    <property type="evidence" value="ECO:0007669"/>
    <property type="project" value="UniProtKB-UniPathway"/>
</dbReference>
<dbReference type="GO" id="GO:0019557">
    <property type="term" value="P:L-histidine catabolic process to glutamate and formate"/>
    <property type="evidence" value="ECO:0007669"/>
    <property type="project" value="UniProtKB-UniPathway"/>
</dbReference>
<dbReference type="GO" id="GO:0033389">
    <property type="term" value="P:putrescine biosynthetic process from arginine, via agmatine"/>
    <property type="evidence" value="ECO:0000318"/>
    <property type="project" value="GO_Central"/>
</dbReference>
<dbReference type="CDD" id="cd09988">
    <property type="entry name" value="Formimidoylglutamase"/>
    <property type="match status" value="1"/>
</dbReference>
<dbReference type="FunFam" id="3.40.800.10:FF:000016">
    <property type="entry name" value="Formimidoylglutamase"/>
    <property type="match status" value="1"/>
</dbReference>
<dbReference type="Gene3D" id="3.40.800.10">
    <property type="entry name" value="Ureohydrolase domain"/>
    <property type="match status" value="1"/>
</dbReference>
<dbReference type="HAMAP" id="MF_00737">
    <property type="entry name" value="Formimidoylglutam"/>
    <property type="match status" value="1"/>
</dbReference>
<dbReference type="InterPro" id="IPR005923">
    <property type="entry name" value="HutG"/>
</dbReference>
<dbReference type="InterPro" id="IPR006035">
    <property type="entry name" value="Ureohydrolase"/>
</dbReference>
<dbReference type="InterPro" id="IPR023696">
    <property type="entry name" value="Ureohydrolase_dom_sf"/>
</dbReference>
<dbReference type="NCBIfam" id="TIGR01227">
    <property type="entry name" value="hutG"/>
    <property type="match status" value="1"/>
</dbReference>
<dbReference type="PANTHER" id="PTHR11358">
    <property type="entry name" value="ARGINASE/AGMATINASE"/>
    <property type="match status" value="1"/>
</dbReference>
<dbReference type="PANTHER" id="PTHR11358:SF35">
    <property type="entry name" value="FORMIMIDOYLGLUTAMASE"/>
    <property type="match status" value="1"/>
</dbReference>
<dbReference type="Pfam" id="PF00491">
    <property type="entry name" value="Arginase"/>
    <property type="match status" value="1"/>
</dbReference>
<dbReference type="SUPFAM" id="SSF52768">
    <property type="entry name" value="Arginase/deacetylase"/>
    <property type="match status" value="1"/>
</dbReference>
<dbReference type="PROSITE" id="PS51409">
    <property type="entry name" value="ARGINASE_2"/>
    <property type="match status" value="1"/>
</dbReference>
<keyword id="KW-0369">Histidine metabolism</keyword>
<keyword id="KW-0378">Hydrolase</keyword>
<keyword id="KW-0464">Manganese</keyword>
<keyword id="KW-0479">Metal-binding</keyword>
<keyword id="KW-1185">Reference proteome</keyword>
<sequence length="318" mass="36250">MEWNGRVDGYDEDILRIHQVIQVKNLDELMENDYTGKKVCFVSYNSNEGIRRNNGRLGAADGWKHLKTALSNFPIFDTDIKFYDLKDPVDVKAGKLEEAQQELAEVVAKLKSKDYFVVCMGGGHDIAYGTYNGILSYAKTQTKDPKVGIISFDAHFDMREYNKGANSGTMFYQIADDCKREGIKFDYNVIGIQRFSNTKRLFDRAKSFGVTYYLAEDILKLSDLNIKPILERNDYIHLTICTDVFHITCAPGVSAPQTFGIWPNQAIGLLNTIAKTKKNLTLEVAEISPRYDYDDRTSRLIANLIYQVILKHFDCEIN</sequence>
<proteinExistence type="inferred from homology"/>
<feature type="chain" id="PRO_0000173754" description="Formimidoylglutamase">
    <location>
        <begin position="1"/>
        <end position="318"/>
    </location>
</feature>
<feature type="binding site" evidence="1">
    <location>
        <position position="124"/>
    </location>
    <ligand>
        <name>Mn(2+)</name>
        <dbReference type="ChEBI" id="CHEBI:29035"/>
        <label>1</label>
    </ligand>
</feature>
<feature type="binding site" evidence="1">
    <location>
        <position position="153"/>
    </location>
    <ligand>
        <name>Mn(2+)</name>
        <dbReference type="ChEBI" id="CHEBI:29035"/>
        <label>1</label>
    </ligand>
</feature>
<feature type="binding site" evidence="1">
    <location>
        <position position="153"/>
    </location>
    <ligand>
        <name>Mn(2+)</name>
        <dbReference type="ChEBI" id="CHEBI:29035"/>
        <label>2</label>
    </ligand>
</feature>
<feature type="binding site" evidence="1">
    <location>
        <position position="155"/>
    </location>
    <ligand>
        <name>Mn(2+)</name>
        <dbReference type="ChEBI" id="CHEBI:29035"/>
        <label>2</label>
    </ligand>
</feature>
<feature type="binding site" evidence="1">
    <location>
        <position position="157"/>
    </location>
    <ligand>
        <name>Mn(2+)</name>
        <dbReference type="ChEBI" id="CHEBI:29035"/>
        <label>1</label>
    </ligand>
</feature>
<feature type="binding site" evidence="1">
    <location>
        <position position="241"/>
    </location>
    <ligand>
        <name>Mn(2+)</name>
        <dbReference type="ChEBI" id="CHEBI:29035"/>
        <label>1</label>
    </ligand>
</feature>
<feature type="binding site" evidence="1">
    <location>
        <position position="241"/>
    </location>
    <ligand>
        <name>Mn(2+)</name>
        <dbReference type="ChEBI" id="CHEBI:29035"/>
        <label>2</label>
    </ligand>
</feature>
<feature type="binding site" evidence="1">
    <location>
        <position position="243"/>
    </location>
    <ligand>
        <name>Mn(2+)</name>
        <dbReference type="ChEBI" id="CHEBI:29035"/>
        <label>2</label>
    </ligand>
</feature>
<gene>
    <name evidence="1" type="primary">hutG</name>
    <name type="ordered locus">FN0662</name>
</gene>
<protein>
    <recommendedName>
        <fullName evidence="1">Formimidoylglutamase</fullName>
        <ecNumber evidence="1">3.5.3.8</ecNumber>
    </recommendedName>
    <alternativeName>
        <fullName evidence="1">Formiminoglutamase</fullName>
    </alternativeName>
    <alternativeName>
        <fullName evidence="1">Formiminoglutamate hydrolase</fullName>
    </alternativeName>
</protein>
<evidence type="ECO:0000255" key="1">
    <source>
        <dbReference type="HAMAP-Rule" id="MF_00737"/>
    </source>
</evidence>
<name>HUTG_FUSNN</name>
<accession>Q8RFN0</accession>